<keyword id="KW-0131">Cell cycle</keyword>
<keyword id="KW-0132">Cell division</keyword>
<keyword id="KW-1003">Cell membrane</keyword>
<keyword id="KW-0159">Chromosome partition</keyword>
<keyword id="KW-0963">Cytoplasm</keyword>
<keyword id="KW-0238">DNA-binding</keyword>
<keyword id="KW-0472">Membrane</keyword>
<keyword id="KW-1185">Reference proteome</keyword>
<reference evidence="4 5" key="1">
    <citation type="journal article" date="2007" name="J. Bacteriol.">
        <title>Genome sequence of Avery's virulent serotype 2 strain D39 of Streptococcus pneumoniae and comparison with that of unencapsulated laboratory strain R6.</title>
        <authorList>
            <person name="Lanie J.A."/>
            <person name="Ng W.-L."/>
            <person name="Kazmierczak K.M."/>
            <person name="Andrzejewski T.M."/>
            <person name="Davidsen T.M."/>
            <person name="Wayne K.J."/>
            <person name="Tettelin H."/>
            <person name="Glass J.I."/>
            <person name="Winkler M.E."/>
        </authorList>
    </citation>
    <scope>NUCLEOTIDE SEQUENCE [LARGE SCALE GENOMIC DNA]</scope>
    <source>
        <strain evidence="5">D39 / NCTC 7466</strain>
    </source>
</reference>
<reference key="2">
    <citation type="journal article" date="2019" name="Nat. Microbiol.">
        <title>RocS drives chromosome segregation and nucleoid protection in Streptococcus pneumoniae.</title>
        <authorList>
            <person name="Mercy C."/>
            <person name="Ducret A."/>
            <person name="Slager J."/>
            <person name="Lavergne J.P."/>
            <person name="Freton C."/>
            <person name="Nagarajan S.N."/>
            <person name="Garcia P.S."/>
            <person name="Noirot-Gros M.F."/>
            <person name="Dubarry N."/>
            <person name="Nourikyan J."/>
            <person name="Veening J.W."/>
            <person name="Grangeasse C."/>
        </authorList>
    </citation>
    <scope>FUNCTION</scope>
    <scope>INTERACTION WITH CPSD AND PARB</scope>
    <scope>SUBCELLULAR LOCATION</scope>
    <scope>DISRUPTION PHENOTYPE</scope>
    <source>
        <strain evidence="3">D39 / NCTC 7466</strain>
    </source>
</reference>
<sequence length="163" mass="18971">MSIEMTVSEIAEVLGLSRQAINNRVKELPEEDTDKNDKGVTVVTRSGLIKLEEIYKKTIFEDEPVSEDVKQRELMEILVDEKNAEILRLYEQLKAKDRQLSEKDEQMRIKDRQIAEKDKQLDQQQQLTLQAMKDQENLKLELDQAKEEVQSTKKGFFARLFGG</sequence>
<accession>A0A0H2ZKY7</accession>
<proteinExistence type="evidence at protein level"/>
<evidence type="ECO:0000250" key="1">
    <source>
        <dbReference type="UniProtKB" id="Q8DQ15"/>
    </source>
</evidence>
<evidence type="ECO:0000269" key="2">
    <source>
    </source>
</evidence>
<evidence type="ECO:0000303" key="3">
    <source>
    </source>
</evidence>
<evidence type="ECO:0000312" key="4">
    <source>
        <dbReference type="EMBL" id="ABJ53627.1"/>
    </source>
</evidence>
<evidence type="ECO:0000312" key="5">
    <source>
        <dbReference type="Proteomes" id="UP000001452"/>
    </source>
</evidence>
<organism evidence="4 5">
    <name type="scientific">Streptococcus pneumoniae serotype 2 (strain D39 / NCTC 7466)</name>
    <dbReference type="NCBI Taxonomy" id="373153"/>
    <lineage>
        <taxon>Bacteria</taxon>
        <taxon>Bacillati</taxon>
        <taxon>Bacillota</taxon>
        <taxon>Bacilli</taxon>
        <taxon>Lactobacillales</taxon>
        <taxon>Streptococcaceae</taxon>
        <taxon>Streptococcus</taxon>
    </lineage>
</organism>
<comment type="function">
    <text evidence="1 2">Required for cell division and chromosome segregation. Binds to DNA and is involved in segregating the origin of replication (oriC) region to new daughter cells (By similarity). When the nucleoid is not properly segregated, involved in blocking the cell division to protect the nucleoid against premature truncation by the newly forming septum, a function which is dependent on CpsD and its autophosphorylation level (PubMed:31182798).</text>
</comment>
<comment type="subunit">
    <text evidence="2">Interacts with CpsD and ParB.</text>
</comment>
<comment type="subcellular location">
    <subcellularLocation>
        <location evidence="1">Cytoplasm</location>
        <location evidence="1">Nucleoid</location>
    </subcellularLocation>
    <subcellularLocation>
        <location evidence="1">Cell membrane</location>
        <topology evidence="1">Peripheral membrane protein</topology>
    </subcellularLocation>
    <text evidence="1 2">Localizes at mid-cell at first and then at the future site of division as the cell elongates. Forms one or two bright foci per cell mostly around mid-cell of small cells. Localizes toward the center of the daughter cell as the cell elongates. The bright foci mostly co-localize with origin of replication (oriC). During the cell cycle, very faint, but highly dynamic foci are homogeneously distributed all around the cell periphery (By similarity). Co-localizes with CpsD at mid-cell only at the early stage of the cell cycle (PubMed:31182798).</text>
</comment>
<comment type="domain">
    <text evidence="1">The N-terminal DNA-binding helix-turn-helix (HTH) domain and the C-terminal membrane-binding amphipathic helix (AH) are both required for the function in chromosome segregation and for its proper subcellular location.</text>
</comment>
<comment type="disruption phenotype">
    <text evidence="2">Cells lacking this gene have a growth defect with an increased generation time compared to wild-type. Nucleoid defects. 13.9% of the cells are anucleate. No effect on capsule production and polymerization. Deletion of this gene does not impact the cell morphology in a permanently autophosphorylated CpsD mimick mutant. In contrast, the deletion of this gene suppresses the elongated phenotype of the autophosphorylation defective CpsD mimick mutant cells.</text>
</comment>
<protein>
    <recommendedName>
        <fullName evidence="3">Regulator of chromosome segregation</fullName>
    </recommendedName>
</protein>
<feature type="chain" id="PRO_0000456760" description="Regulator of chromosome segregation">
    <location>
        <begin position="1"/>
        <end position="163"/>
    </location>
</feature>
<dbReference type="EMBL" id="CP000410">
    <property type="protein sequence ID" value="ABJ53627.1"/>
    <property type="molecule type" value="Genomic_DNA"/>
</dbReference>
<dbReference type="RefSeq" id="WP_000021242.1">
    <property type="nucleotide sequence ID" value="NZ_JAMLJR010000004.1"/>
</dbReference>
<dbReference type="SMR" id="A0A0H2ZKY7"/>
<dbReference type="PaxDb" id="373153-SPD_0878"/>
<dbReference type="GeneID" id="93739471"/>
<dbReference type="KEGG" id="spd:SPD_0878"/>
<dbReference type="eggNOG" id="ENOG5033BIW">
    <property type="taxonomic scope" value="Bacteria"/>
</dbReference>
<dbReference type="HOGENOM" id="CLU_1561956_0_0_9"/>
<dbReference type="BioCyc" id="SPNE373153:G1G6V-964-MONOMER"/>
<dbReference type="Proteomes" id="UP000001452">
    <property type="component" value="Chromosome"/>
</dbReference>
<dbReference type="GO" id="GO:0032153">
    <property type="term" value="C:cell division site"/>
    <property type="evidence" value="ECO:0000250"/>
    <property type="project" value="UniProtKB"/>
</dbReference>
<dbReference type="GO" id="GO:0005737">
    <property type="term" value="C:cytoplasm"/>
    <property type="evidence" value="ECO:0007669"/>
    <property type="project" value="UniProtKB-KW"/>
</dbReference>
<dbReference type="GO" id="GO:0009295">
    <property type="term" value="C:nucleoid"/>
    <property type="evidence" value="ECO:0000250"/>
    <property type="project" value="UniProtKB"/>
</dbReference>
<dbReference type="GO" id="GO:0005886">
    <property type="term" value="C:plasma membrane"/>
    <property type="evidence" value="ECO:0000250"/>
    <property type="project" value="UniProtKB"/>
</dbReference>
<dbReference type="GO" id="GO:0003677">
    <property type="term" value="F:DNA binding"/>
    <property type="evidence" value="ECO:0000250"/>
    <property type="project" value="UniProtKB"/>
</dbReference>
<dbReference type="GO" id="GO:0051301">
    <property type="term" value="P:cell division"/>
    <property type="evidence" value="ECO:0000250"/>
    <property type="project" value="UniProtKB"/>
</dbReference>
<dbReference type="GO" id="GO:0007059">
    <property type="term" value="P:chromosome segregation"/>
    <property type="evidence" value="ECO:0007669"/>
    <property type="project" value="UniProtKB-KW"/>
</dbReference>
<dbReference type="GO" id="GO:0090143">
    <property type="term" value="P:nucleoid organization"/>
    <property type="evidence" value="ECO:0000315"/>
    <property type="project" value="UniProtKB"/>
</dbReference>
<dbReference type="GO" id="GO:0051984">
    <property type="term" value="P:positive regulation of chromosome segregation"/>
    <property type="evidence" value="ECO:0000250"/>
    <property type="project" value="UniProtKB"/>
</dbReference>
<dbReference type="InterPro" id="IPR007489">
    <property type="entry name" value="RocS-like_C"/>
</dbReference>
<dbReference type="Pfam" id="PF04394">
    <property type="entry name" value="DUF536"/>
    <property type="match status" value="1"/>
</dbReference>
<dbReference type="Pfam" id="PF13412">
    <property type="entry name" value="HTH_24"/>
    <property type="match status" value="1"/>
</dbReference>
<name>ROCS_STRP2</name>
<gene>
    <name evidence="3" type="primary">rocS</name>
    <name evidence="4" type="ordered locus">SPD_0878</name>
</gene>